<feature type="chain" id="PRO_0000382957" description="Probable 4-amino-4-deoxy-L-arabinose-phosphoundecaprenol flippase subunit ArnE">
    <location>
        <begin position="1"/>
        <end position="111"/>
    </location>
</feature>
<feature type="topological domain" description="Cytoplasmic" evidence="1">
    <location>
        <begin position="1"/>
        <end position="35"/>
    </location>
</feature>
<feature type="transmembrane region" description="Helical" evidence="2">
    <location>
        <begin position="36"/>
        <end position="56"/>
    </location>
</feature>
<feature type="topological domain" description="Periplasmic" evidence="1">
    <location>
        <begin position="57"/>
        <end position="60"/>
    </location>
</feature>
<feature type="transmembrane region" description="Helical" evidence="2">
    <location>
        <begin position="61"/>
        <end position="81"/>
    </location>
</feature>
<feature type="topological domain" description="Cytoplasmic" evidence="1">
    <location>
        <begin position="82"/>
        <end position="87"/>
    </location>
</feature>
<feature type="transmembrane region" description="Helical" evidence="2">
    <location>
        <begin position="88"/>
        <end position="108"/>
    </location>
</feature>
<feature type="topological domain" description="Periplasmic" evidence="1">
    <location>
        <begin position="109"/>
        <end position="111"/>
    </location>
</feature>
<feature type="domain" description="EamA" evidence="2">
    <location>
        <begin position="40"/>
        <end position="109"/>
    </location>
</feature>
<protein>
    <recommendedName>
        <fullName evidence="2">Probable 4-amino-4-deoxy-L-arabinose-phosphoundecaprenol flippase subunit ArnE</fullName>
        <shortName evidence="2">L-Ara4N-phosphoundecaprenol flippase subunit ArnE</shortName>
    </recommendedName>
    <alternativeName>
        <fullName evidence="2">Undecaprenyl phosphate-aminoarabinose flippase subunit ArnE</fullName>
    </alternativeName>
</protein>
<evidence type="ECO:0000255" key="1"/>
<evidence type="ECO:0000255" key="2">
    <source>
        <dbReference type="HAMAP-Rule" id="MF_01869"/>
    </source>
</evidence>
<gene>
    <name evidence="2" type="primary">arnE</name>
    <name type="ordered locus">EcolC_1391</name>
</gene>
<dbReference type="EMBL" id="CP000946">
    <property type="protein sequence ID" value="ACA77055.1"/>
    <property type="molecule type" value="Genomic_DNA"/>
</dbReference>
<dbReference type="RefSeq" id="WP_000638031.1">
    <property type="nucleotide sequence ID" value="NZ_MTFT01000028.1"/>
</dbReference>
<dbReference type="SMR" id="B1IXS9"/>
<dbReference type="GeneID" id="93774916"/>
<dbReference type="KEGG" id="ecl:EcolC_1391"/>
<dbReference type="HOGENOM" id="CLU_131462_5_1_6"/>
<dbReference type="UniPathway" id="UPA00030"/>
<dbReference type="GO" id="GO:0005886">
    <property type="term" value="C:plasma membrane"/>
    <property type="evidence" value="ECO:0007669"/>
    <property type="project" value="UniProtKB-SubCell"/>
</dbReference>
<dbReference type="GO" id="GO:1901505">
    <property type="term" value="F:carbohydrate derivative transmembrane transporter activity"/>
    <property type="evidence" value="ECO:0007669"/>
    <property type="project" value="InterPro"/>
</dbReference>
<dbReference type="GO" id="GO:0009245">
    <property type="term" value="P:lipid A biosynthetic process"/>
    <property type="evidence" value="ECO:0007669"/>
    <property type="project" value="UniProtKB-UniRule"/>
</dbReference>
<dbReference type="GO" id="GO:0009103">
    <property type="term" value="P:lipopolysaccharide biosynthetic process"/>
    <property type="evidence" value="ECO:0007669"/>
    <property type="project" value="UniProtKB-UniRule"/>
</dbReference>
<dbReference type="FunFam" id="1.10.3730.20:FF:000002">
    <property type="entry name" value="Probable 4-amino-4-deoxy-L-arabinose-phosphoundecaprenol flippase subunit ArnE"/>
    <property type="match status" value="1"/>
</dbReference>
<dbReference type="Gene3D" id="1.10.3730.20">
    <property type="match status" value="1"/>
</dbReference>
<dbReference type="HAMAP" id="MF_01869">
    <property type="entry name" value="Flippase_ArnE"/>
    <property type="match status" value="1"/>
</dbReference>
<dbReference type="InterPro" id="IPR000620">
    <property type="entry name" value="EamA_dom"/>
</dbReference>
<dbReference type="InterPro" id="IPR022883">
    <property type="entry name" value="Flippase_ArnE"/>
</dbReference>
<dbReference type="InterPro" id="IPR000390">
    <property type="entry name" value="Small_drug/metabolite_transptr"/>
</dbReference>
<dbReference type="NCBIfam" id="NF011625">
    <property type="entry name" value="PRK15051.1"/>
    <property type="match status" value="1"/>
</dbReference>
<dbReference type="PANTHER" id="PTHR30561:SF23">
    <property type="entry name" value="4-AMINO-4-DEOXY-L-ARABINOSE-PHOSPHOUNDECAPRENOL FLIPPASE SUBUNIT ARNE-RELATED"/>
    <property type="match status" value="1"/>
</dbReference>
<dbReference type="PANTHER" id="PTHR30561">
    <property type="entry name" value="SMR FAMILY PROTON-DEPENDENT DRUG EFFLUX TRANSPORTER SUGE"/>
    <property type="match status" value="1"/>
</dbReference>
<dbReference type="Pfam" id="PF00892">
    <property type="entry name" value="EamA"/>
    <property type="match status" value="1"/>
</dbReference>
<dbReference type="SUPFAM" id="SSF103481">
    <property type="entry name" value="Multidrug resistance efflux transporter EmrE"/>
    <property type="match status" value="1"/>
</dbReference>
<name>ARNE_ECOLC</name>
<reference key="1">
    <citation type="submission" date="2008-02" db="EMBL/GenBank/DDBJ databases">
        <title>Complete sequence of Escherichia coli C str. ATCC 8739.</title>
        <authorList>
            <person name="Copeland A."/>
            <person name="Lucas S."/>
            <person name="Lapidus A."/>
            <person name="Glavina del Rio T."/>
            <person name="Dalin E."/>
            <person name="Tice H."/>
            <person name="Bruce D."/>
            <person name="Goodwin L."/>
            <person name="Pitluck S."/>
            <person name="Kiss H."/>
            <person name="Brettin T."/>
            <person name="Detter J.C."/>
            <person name="Han C."/>
            <person name="Kuske C.R."/>
            <person name="Schmutz J."/>
            <person name="Larimer F."/>
            <person name="Land M."/>
            <person name="Hauser L."/>
            <person name="Kyrpides N."/>
            <person name="Mikhailova N."/>
            <person name="Ingram L."/>
            <person name="Richardson P."/>
        </authorList>
    </citation>
    <scope>NUCLEOTIDE SEQUENCE [LARGE SCALE GENOMIC DNA]</scope>
    <source>
        <strain>ATCC 8739 / DSM 1576 / NBRC 3972 / NCIMB 8545 / WDCM 00012 / Crooks</strain>
    </source>
</reference>
<comment type="function">
    <text evidence="2">Translocates 4-amino-4-deoxy-L-arabinose-phosphoundecaprenol (alpha-L-Ara4N-phosphoundecaprenol) from the cytoplasmic to the periplasmic side of the inner membrane.</text>
</comment>
<comment type="pathway">
    <text evidence="2">Bacterial outer membrane biogenesis; lipopolysaccharide biosynthesis.</text>
</comment>
<comment type="subunit">
    <text evidence="2">Heterodimer of ArnE and ArnF.</text>
</comment>
<comment type="subcellular location">
    <subcellularLocation>
        <location evidence="2">Cell inner membrane</location>
        <topology evidence="2">Multi-pass membrane protein</topology>
    </subcellularLocation>
</comment>
<comment type="similarity">
    <text evidence="2">Belongs to the ArnE family.</text>
</comment>
<keyword id="KW-0997">Cell inner membrane</keyword>
<keyword id="KW-1003">Cell membrane</keyword>
<keyword id="KW-0441">Lipid A biosynthesis</keyword>
<keyword id="KW-0444">Lipid biosynthesis</keyword>
<keyword id="KW-0443">Lipid metabolism</keyword>
<keyword id="KW-0448">Lipopolysaccharide biosynthesis</keyword>
<keyword id="KW-0472">Membrane</keyword>
<keyword id="KW-0812">Transmembrane</keyword>
<keyword id="KW-1133">Transmembrane helix</keyword>
<keyword id="KW-0813">Transport</keyword>
<sequence>MIWLTLVFASLLSVAGQLCQKQATCFVAINKRRKHIVLWLGLALACLGLAMVLWLLVLQNVPVGIAYPMLSLNFVWVTLAAVKLWHEPVSPRHWCGVAFIIGGIVILGSTV</sequence>
<proteinExistence type="inferred from homology"/>
<organism>
    <name type="scientific">Escherichia coli (strain ATCC 8739 / DSM 1576 / NBRC 3972 / NCIMB 8545 / WDCM 00012 / Crooks)</name>
    <dbReference type="NCBI Taxonomy" id="481805"/>
    <lineage>
        <taxon>Bacteria</taxon>
        <taxon>Pseudomonadati</taxon>
        <taxon>Pseudomonadota</taxon>
        <taxon>Gammaproteobacteria</taxon>
        <taxon>Enterobacterales</taxon>
        <taxon>Enterobacteriaceae</taxon>
        <taxon>Escherichia</taxon>
    </lineage>
</organism>
<accession>B1IXS9</accession>